<evidence type="ECO:0000255" key="1">
    <source>
        <dbReference type="HAMAP-Rule" id="MF_01569"/>
    </source>
</evidence>
<dbReference type="EC" id="6.1.1.15" evidence="1"/>
<dbReference type="EMBL" id="CP000544">
    <property type="protein sequence ID" value="ABM61483.1"/>
    <property type="molecule type" value="Genomic_DNA"/>
</dbReference>
<dbReference type="RefSeq" id="WP_011813506.1">
    <property type="nucleotide sequence ID" value="NC_008789.1"/>
</dbReference>
<dbReference type="SMR" id="A1WUX1"/>
<dbReference type="STRING" id="349124.Hhal_0701"/>
<dbReference type="KEGG" id="hha:Hhal_0701"/>
<dbReference type="eggNOG" id="COG0442">
    <property type="taxonomic scope" value="Bacteria"/>
</dbReference>
<dbReference type="HOGENOM" id="CLU_016739_0_0_6"/>
<dbReference type="OrthoDB" id="9809052at2"/>
<dbReference type="Proteomes" id="UP000000647">
    <property type="component" value="Chromosome"/>
</dbReference>
<dbReference type="GO" id="GO:0005829">
    <property type="term" value="C:cytosol"/>
    <property type="evidence" value="ECO:0007669"/>
    <property type="project" value="TreeGrafter"/>
</dbReference>
<dbReference type="GO" id="GO:0002161">
    <property type="term" value="F:aminoacyl-tRNA deacylase activity"/>
    <property type="evidence" value="ECO:0007669"/>
    <property type="project" value="InterPro"/>
</dbReference>
<dbReference type="GO" id="GO:0005524">
    <property type="term" value="F:ATP binding"/>
    <property type="evidence" value="ECO:0007669"/>
    <property type="project" value="UniProtKB-UniRule"/>
</dbReference>
<dbReference type="GO" id="GO:0004827">
    <property type="term" value="F:proline-tRNA ligase activity"/>
    <property type="evidence" value="ECO:0007669"/>
    <property type="project" value="UniProtKB-UniRule"/>
</dbReference>
<dbReference type="GO" id="GO:0006433">
    <property type="term" value="P:prolyl-tRNA aminoacylation"/>
    <property type="evidence" value="ECO:0007669"/>
    <property type="project" value="UniProtKB-UniRule"/>
</dbReference>
<dbReference type="CDD" id="cd04334">
    <property type="entry name" value="ProRS-INS"/>
    <property type="match status" value="1"/>
</dbReference>
<dbReference type="CDD" id="cd00861">
    <property type="entry name" value="ProRS_anticodon_short"/>
    <property type="match status" value="1"/>
</dbReference>
<dbReference type="CDD" id="cd00779">
    <property type="entry name" value="ProRS_core_prok"/>
    <property type="match status" value="1"/>
</dbReference>
<dbReference type="FunFam" id="3.30.930.10:FF:000043">
    <property type="entry name" value="Proline--tRNA ligase"/>
    <property type="match status" value="1"/>
</dbReference>
<dbReference type="FunFam" id="3.30.930.10:FF:000062">
    <property type="entry name" value="Proline--tRNA ligase"/>
    <property type="match status" value="1"/>
</dbReference>
<dbReference type="Gene3D" id="3.40.50.800">
    <property type="entry name" value="Anticodon-binding domain"/>
    <property type="match status" value="1"/>
</dbReference>
<dbReference type="Gene3D" id="3.30.930.10">
    <property type="entry name" value="Bira Bifunctional Protein, Domain 2"/>
    <property type="match status" value="2"/>
</dbReference>
<dbReference type="Gene3D" id="3.90.960.10">
    <property type="entry name" value="YbaK/aminoacyl-tRNA synthetase-associated domain"/>
    <property type="match status" value="1"/>
</dbReference>
<dbReference type="HAMAP" id="MF_01569">
    <property type="entry name" value="Pro_tRNA_synth_type1"/>
    <property type="match status" value="1"/>
</dbReference>
<dbReference type="InterPro" id="IPR002314">
    <property type="entry name" value="aa-tRNA-synt_IIb"/>
</dbReference>
<dbReference type="InterPro" id="IPR006195">
    <property type="entry name" value="aa-tRNA-synth_II"/>
</dbReference>
<dbReference type="InterPro" id="IPR045864">
    <property type="entry name" value="aa-tRNA-synth_II/BPL/LPL"/>
</dbReference>
<dbReference type="InterPro" id="IPR004154">
    <property type="entry name" value="Anticodon-bd"/>
</dbReference>
<dbReference type="InterPro" id="IPR036621">
    <property type="entry name" value="Anticodon-bd_dom_sf"/>
</dbReference>
<dbReference type="InterPro" id="IPR002316">
    <property type="entry name" value="Pro-tRNA-ligase_IIa"/>
</dbReference>
<dbReference type="InterPro" id="IPR004500">
    <property type="entry name" value="Pro-tRNA-synth_IIa_bac-type"/>
</dbReference>
<dbReference type="InterPro" id="IPR023717">
    <property type="entry name" value="Pro-tRNA-Synthase_IIa_type1"/>
</dbReference>
<dbReference type="InterPro" id="IPR050062">
    <property type="entry name" value="Pro-tRNA_synthetase"/>
</dbReference>
<dbReference type="InterPro" id="IPR044140">
    <property type="entry name" value="ProRS_anticodon_short"/>
</dbReference>
<dbReference type="InterPro" id="IPR033730">
    <property type="entry name" value="ProRS_core_prok"/>
</dbReference>
<dbReference type="InterPro" id="IPR036754">
    <property type="entry name" value="YbaK/aa-tRNA-synt-asso_dom_sf"/>
</dbReference>
<dbReference type="InterPro" id="IPR007214">
    <property type="entry name" value="YbaK/aa-tRNA-synth-assoc-dom"/>
</dbReference>
<dbReference type="NCBIfam" id="NF006625">
    <property type="entry name" value="PRK09194.1"/>
    <property type="match status" value="1"/>
</dbReference>
<dbReference type="NCBIfam" id="TIGR00409">
    <property type="entry name" value="proS_fam_II"/>
    <property type="match status" value="1"/>
</dbReference>
<dbReference type="PANTHER" id="PTHR42753">
    <property type="entry name" value="MITOCHONDRIAL RIBOSOME PROTEIN L39/PROLYL-TRNA LIGASE FAMILY MEMBER"/>
    <property type="match status" value="1"/>
</dbReference>
<dbReference type="PANTHER" id="PTHR42753:SF2">
    <property type="entry name" value="PROLINE--TRNA LIGASE"/>
    <property type="match status" value="1"/>
</dbReference>
<dbReference type="Pfam" id="PF03129">
    <property type="entry name" value="HGTP_anticodon"/>
    <property type="match status" value="1"/>
</dbReference>
<dbReference type="Pfam" id="PF00587">
    <property type="entry name" value="tRNA-synt_2b"/>
    <property type="match status" value="1"/>
</dbReference>
<dbReference type="Pfam" id="PF04073">
    <property type="entry name" value="tRNA_edit"/>
    <property type="match status" value="1"/>
</dbReference>
<dbReference type="PIRSF" id="PIRSF001535">
    <property type="entry name" value="ProRS_1"/>
    <property type="match status" value="1"/>
</dbReference>
<dbReference type="PRINTS" id="PR01046">
    <property type="entry name" value="TRNASYNTHPRO"/>
</dbReference>
<dbReference type="SUPFAM" id="SSF52954">
    <property type="entry name" value="Class II aaRS ABD-related"/>
    <property type="match status" value="1"/>
</dbReference>
<dbReference type="SUPFAM" id="SSF55681">
    <property type="entry name" value="Class II aaRS and biotin synthetases"/>
    <property type="match status" value="1"/>
</dbReference>
<dbReference type="SUPFAM" id="SSF55826">
    <property type="entry name" value="YbaK/ProRS associated domain"/>
    <property type="match status" value="1"/>
</dbReference>
<dbReference type="PROSITE" id="PS50862">
    <property type="entry name" value="AA_TRNA_LIGASE_II"/>
    <property type="match status" value="1"/>
</dbReference>
<keyword id="KW-0030">Aminoacyl-tRNA synthetase</keyword>
<keyword id="KW-0067">ATP-binding</keyword>
<keyword id="KW-0963">Cytoplasm</keyword>
<keyword id="KW-0436">Ligase</keyword>
<keyword id="KW-0547">Nucleotide-binding</keyword>
<keyword id="KW-0648">Protein biosynthesis</keyword>
<keyword id="KW-1185">Reference proteome</keyword>
<sequence>MRVTRFPLSTTRETPADAEIVSHQLMLRAGMIRRLSSGLYTWLPLGLRVLQKVERIVREEMNRAGALEVLMPAVQPAELWQESGRWEKYGPELLRIRDRHDREGCFGPTHEEVITDLFRREIRSYRQLPVNYYQIQTKFRDEIRPRFGVMRAREFLMKDAYSFHLDDDDLRAEYQRMHEAYCRIFQRTGLAFRPVEADTGAIGGSVSHEFMVLADSGEDAIAVCEASGYAANVELAPAVAPTEPRPAPQAERAEVATPGQRTIAEVAAYLGLPEARNLKTLLVEGADGGLVALLLRGDHELNELKAEKHPAVKAPLTFAEAERVERQLGCPFGSLGPVGLTGVTLIADHAAAHLADFACGANREGYHLTGVNWGRDLPEPETADLREVTAGDPSPDGEGTLTLRRGIEVGHIFQLGTTYSEAMGASVLDEQGQERTVTMGCYGIGVSRVVAAAIEQNHDDRGICWPAPIAPFQVALVAIKAEDPAVAEAAEALYADLTASGIDVLYDDRDARPGVKFADMELIGIPHRVVVSPRAIQEGSVEYKGRQDADPTHVPRAEIVTWLKNRLT</sequence>
<accession>A1WUX1</accession>
<feature type="chain" id="PRO_0000288331" description="Proline--tRNA ligase">
    <location>
        <begin position="1"/>
        <end position="568"/>
    </location>
</feature>
<proteinExistence type="inferred from homology"/>
<name>SYP_HALHL</name>
<organism>
    <name type="scientific">Halorhodospira halophila (strain DSM 244 / SL1)</name>
    <name type="common">Ectothiorhodospira halophila (strain DSM 244 / SL1)</name>
    <dbReference type="NCBI Taxonomy" id="349124"/>
    <lineage>
        <taxon>Bacteria</taxon>
        <taxon>Pseudomonadati</taxon>
        <taxon>Pseudomonadota</taxon>
        <taxon>Gammaproteobacteria</taxon>
        <taxon>Chromatiales</taxon>
        <taxon>Ectothiorhodospiraceae</taxon>
        <taxon>Halorhodospira</taxon>
    </lineage>
</organism>
<protein>
    <recommendedName>
        <fullName evidence="1">Proline--tRNA ligase</fullName>
        <ecNumber evidence="1">6.1.1.15</ecNumber>
    </recommendedName>
    <alternativeName>
        <fullName evidence="1">Prolyl-tRNA synthetase</fullName>
        <shortName evidence="1">ProRS</shortName>
    </alternativeName>
</protein>
<gene>
    <name evidence="1" type="primary">proS</name>
    <name type="ordered locus">Hhal_0701</name>
</gene>
<reference key="1">
    <citation type="submission" date="2006-12" db="EMBL/GenBank/DDBJ databases">
        <title>Complete sequence of Halorhodospira halophila SL1.</title>
        <authorList>
            <consortium name="US DOE Joint Genome Institute"/>
            <person name="Copeland A."/>
            <person name="Lucas S."/>
            <person name="Lapidus A."/>
            <person name="Barry K."/>
            <person name="Detter J.C."/>
            <person name="Glavina del Rio T."/>
            <person name="Hammon N."/>
            <person name="Israni S."/>
            <person name="Dalin E."/>
            <person name="Tice H."/>
            <person name="Pitluck S."/>
            <person name="Saunders E."/>
            <person name="Brettin T."/>
            <person name="Bruce D."/>
            <person name="Han C."/>
            <person name="Tapia R."/>
            <person name="Schmutz J."/>
            <person name="Larimer F."/>
            <person name="Land M."/>
            <person name="Hauser L."/>
            <person name="Kyrpides N."/>
            <person name="Mikhailova N."/>
            <person name="Hoff W."/>
            <person name="Richardson P."/>
        </authorList>
    </citation>
    <scope>NUCLEOTIDE SEQUENCE [LARGE SCALE GENOMIC DNA]</scope>
    <source>
        <strain>DSM 244 / SL1</strain>
    </source>
</reference>
<comment type="function">
    <text evidence="1">Catalyzes the attachment of proline to tRNA(Pro) in a two-step reaction: proline is first activated by ATP to form Pro-AMP and then transferred to the acceptor end of tRNA(Pro). As ProRS can inadvertently accommodate and process non-cognate amino acids such as alanine and cysteine, to avoid such errors it has two additional distinct editing activities against alanine. One activity is designated as 'pretransfer' editing and involves the tRNA(Pro)-independent hydrolysis of activated Ala-AMP. The other activity is designated 'posttransfer' editing and involves deacylation of mischarged Ala-tRNA(Pro). The misacylated Cys-tRNA(Pro) is not edited by ProRS.</text>
</comment>
<comment type="catalytic activity">
    <reaction evidence="1">
        <text>tRNA(Pro) + L-proline + ATP = L-prolyl-tRNA(Pro) + AMP + diphosphate</text>
        <dbReference type="Rhea" id="RHEA:14305"/>
        <dbReference type="Rhea" id="RHEA-COMP:9700"/>
        <dbReference type="Rhea" id="RHEA-COMP:9702"/>
        <dbReference type="ChEBI" id="CHEBI:30616"/>
        <dbReference type="ChEBI" id="CHEBI:33019"/>
        <dbReference type="ChEBI" id="CHEBI:60039"/>
        <dbReference type="ChEBI" id="CHEBI:78442"/>
        <dbReference type="ChEBI" id="CHEBI:78532"/>
        <dbReference type="ChEBI" id="CHEBI:456215"/>
        <dbReference type="EC" id="6.1.1.15"/>
    </reaction>
</comment>
<comment type="subunit">
    <text evidence="1">Homodimer.</text>
</comment>
<comment type="subcellular location">
    <subcellularLocation>
        <location evidence="1">Cytoplasm</location>
    </subcellularLocation>
</comment>
<comment type="domain">
    <text evidence="1">Consists of three domains: the N-terminal catalytic domain, the editing domain and the C-terminal anticodon-binding domain.</text>
</comment>
<comment type="similarity">
    <text evidence="1">Belongs to the class-II aminoacyl-tRNA synthetase family. ProS type 1 subfamily.</text>
</comment>